<name>MURA_CERSK</name>
<gene>
    <name evidence="1" type="primary">murA</name>
    <name type="ordered locus">RSKD131_1988</name>
</gene>
<dbReference type="EC" id="2.5.1.7" evidence="1"/>
<dbReference type="EMBL" id="CP001150">
    <property type="protein sequence ID" value="ACM01848.1"/>
    <property type="molecule type" value="Genomic_DNA"/>
</dbReference>
<dbReference type="RefSeq" id="WP_009561893.1">
    <property type="nucleotide sequence ID" value="NC_011963.1"/>
</dbReference>
<dbReference type="SMR" id="B9KL51"/>
<dbReference type="GeneID" id="67447380"/>
<dbReference type="KEGG" id="rsk:RSKD131_1988"/>
<dbReference type="HOGENOM" id="CLU_027387_0_0_5"/>
<dbReference type="UniPathway" id="UPA00219"/>
<dbReference type="GO" id="GO:0005737">
    <property type="term" value="C:cytoplasm"/>
    <property type="evidence" value="ECO:0007669"/>
    <property type="project" value="UniProtKB-SubCell"/>
</dbReference>
<dbReference type="GO" id="GO:0008760">
    <property type="term" value="F:UDP-N-acetylglucosamine 1-carboxyvinyltransferase activity"/>
    <property type="evidence" value="ECO:0007669"/>
    <property type="project" value="UniProtKB-UniRule"/>
</dbReference>
<dbReference type="GO" id="GO:0051301">
    <property type="term" value="P:cell division"/>
    <property type="evidence" value="ECO:0007669"/>
    <property type="project" value="UniProtKB-KW"/>
</dbReference>
<dbReference type="GO" id="GO:0071555">
    <property type="term" value="P:cell wall organization"/>
    <property type="evidence" value="ECO:0007669"/>
    <property type="project" value="UniProtKB-KW"/>
</dbReference>
<dbReference type="GO" id="GO:0009252">
    <property type="term" value="P:peptidoglycan biosynthetic process"/>
    <property type="evidence" value="ECO:0007669"/>
    <property type="project" value="UniProtKB-UniRule"/>
</dbReference>
<dbReference type="GO" id="GO:0008360">
    <property type="term" value="P:regulation of cell shape"/>
    <property type="evidence" value="ECO:0007669"/>
    <property type="project" value="UniProtKB-KW"/>
</dbReference>
<dbReference type="GO" id="GO:0019277">
    <property type="term" value="P:UDP-N-acetylgalactosamine biosynthetic process"/>
    <property type="evidence" value="ECO:0007669"/>
    <property type="project" value="InterPro"/>
</dbReference>
<dbReference type="CDD" id="cd01555">
    <property type="entry name" value="UdpNAET"/>
    <property type="match status" value="1"/>
</dbReference>
<dbReference type="FunFam" id="3.65.10.10:FF:000001">
    <property type="entry name" value="UDP-N-acetylglucosamine 1-carboxyvinyltransferase"/>
    <property type="match status" value="1"/>
</dbReference>
<dbReference type="Gene3D" id="3.65.10.10">
    <property type="entry name" value="Enolpyruvate transferase domain"/>
    <property type="match status" value="2"/>
</dbReference>
<dbReference type="HAMAP" id="MF_00111">
    <property type="entry name" value="MurA"/>
    <property type="match status" value="1"/>
</dbReference>
<dbReference type="InterPro" id="IPR001986">
    <property type="entry name" value="Enolpyruvate_Tfrase_dom"/>
</dbReference>
<dbReference type="InterPro" id="IPR036968">
    <property type="entry name" value="Enolpyruvate_Tfrase_sf"/>
</dbReference>
<dbReference type="InterPro" id="IPR050068">
    <property type="entry name" value="MurA_subfamily"/>
</dbReference>
<dbReference type="InterPro" id="IPR013792">
    <property type="entry name" value="RNA3'P_cycl/enolpyr_Trfase_a/b"/>
</dbReference>
<dbReference type="InterPro" id="IPR005750">
    <property type="entry name" value="UDP_GlcNAc_COvinyl_MurA"/>
</dbReference>
<dbReference type="NCBIfam" id="TIGR01072">
    <property type="entry name" value="murA"/>
    <property type="match status" value="1"/>
</dbReference>
<dbReference type="NCBIfam" id="NF006873">
    <property type="entry name" value="PRK09369.1"/>
    <property type="match status" value="1"/>
</dbReference>
<dbReference type="PANTHER" id="PTHR43783">
    <property type="entry name" value="UDP-N-ACETYLGLUCOSAMINE 1-CARBOXYVINYLTRANSFERASE"/>
    <property type="match status" value="1"/>
</dbReference>
<dbReference type="PANTHER" id="PTHR43783:SF1">
    <property type="entry name" value="UDP-N-ACETYLGLUCOSAMINE 1-CARBOXYVINYLTRANSFERASE"/>
    <property type="match status" value="1"/>
</dbReference>
<dbReference type="Pfam" id="PF00275">
    <property type="entry name" value="EPSP_synthase"/>
    <property type="match status" value="1"/>
</dbReference>
<dbReference type="SUPFAM" id="SSF55205">
    <property type="entry name" value="EPT/RTPC-like"/>
    <property type="match status" value="1"/>
</dbReference>
<comment type="function">
    <text evidence="1">Cell wall formation. Adds enolpyruvyl to UDP-N-acetylglucosamine.</text>
</comment>
<comment type="catalytic activity">
    <reaction evidence="1">
        <text>phosphoenolpyruvate + UDP-N-acetyl-alpha-D-glucosamine = UDP-N-acetyl-3-O-(1-carboxyvinyl)-alpha-D-glucosamine + phosphate</text>
        <dbReference type="Rhea" id="RHEA:18681"/>
        <dbReference type="ChEBI" id="CHEBI:43474"/>
        <dbReference type="ChEBI" id="CHEBI:57705"/>
        <dbReference type="ChEBI" id="CHEBI:58702"/>
        <dbReference type="ChEBI" id="CHEBI:68483"/>
        <dbReference type="EC" id="2.5.1.7"/>
    </reaction>
</comment>
<comment type="pathway">
    <text evidence="1">Cell wall biogenesis; peptidoglycan biosynthesis.</text>
</comment>
<comment type="subcellular location">
    <subcellularLocation>
        <location evidence="1">Cytoplasm</location>
    </subcellularLocation>
</comment>
<comment type="similarity">
    <text evidence="1">Belongs to the EPSP synthase family. MurA subfamily.</text>
</comment>
<keyword id="KW-0131">Cell cycle</keyword>
<keyword id="KW-0132">Cell division</keyword>
<keyword id="KW-0133">Cell shape</keyword>
<keyword id="KW-0961">Cell wall biogenesis/degradation</keyword>
<keyword id="KW-0963">Cytoplasm</keyword>
<keyword id="KW-0573">Peptidoglycan synthesis</keyword>
<keyword id="KW-0670">Pyruvate</keyword>
<keyword id="KW-0808">Transferase</keyword>
<accession>B9KL51</accession>
<feature type="chain" id="PRO_1000119122" description="UDP-N-acetylglucosamine 1-carboxyvinyltransferase">
    <location>
        <begin position="1"/>
        <end position="422"/>
    </location>
</feature>
<feature type="active site" description="Proton donor" evidence="1">
    <location>
        <position position="118"/>
    </location>
</feature>
<feature type="binding site" evidence="1">
    <location>
        <begin position="22"/>
        <end position="23"/>
    </location>
    <ligand>
        <name>phosphoenolpyruvate</name>
        <dbReference type="ChEBI" id="CHEBI:58702"/>
    </ligand>
</feature>
<feature type="binding site" evidence="1">
    <location>
        <position position="94"/>
    </location>
    <ligand>
        <name>UDP-N-acetyl-alpha-D-glucosamine</name>
        <dbReference type="ChEBI" id="CHEBI:57705"/>
    </ligand>
</feature>
<feature type="binding site" evidence="1">
    <location>
        <begin position="123"/>
        <end position="127"/>
    </location>
    <ligand>
        <name>UDP-N-acetyl-alpha-D-glucosamine</name>
        <dbReference type="ChEBI" id="CHEBI:57705"/>
    </ligand>
</feature>
<feature type="binding site" evidence="1">
    <location>
        <position position="309"/>
    </location>
    <ligand>
        <name>UDP-N-acetyl-alpha-D-glucosamine</name>
        <dbReference type="ChEBI" id="CHEBI:57705"/>
    </ligand>
</feature>
<feature type="binding site" evidence="1">
    <location>
        <position position="331"/>
    </location>
    <ligand>
        <name>UDP-N-acetyl-alpha-D-glucosamine</name>
        <dbReference type="ChEBI" id="CHEBI:57705"/>
    </ligand>
</feature>
<feature type="modified residue" description="2-(S-cysteinyl)pyruvic acid O-phosphothioketal" evidence="1">
    <location>
        <position position="118"/>
    </location>
</feature>
<sequence>MDSILVKGNGELRGQIPIAGAKNACLALMPATLLSDEPLTLTNAPRLSDIRTMTQLLQSLGAEVASLQGGQVLALSSHALTDHRADYDIVRKMRASILVLGPMLARDGHAVVSLPGGCAIGARPVDLHLKALEAMGAELDLRDGYIHAKAPAGGLKGARVVFPLVSVGATENALMAATLAKGTTVLENAAREPEIVDLARCLRRMGAQIEGEGSSTITIEGVDRLGGATHPVVTDRIELGTYMLAPAICGGEVELLGGRIELVGAFCEKLDAAGISVEETERGLRVARKNGRVKAVDVMTEPFPGFPTDLQAQMMALLCTAEGTSVLEERIFENRFMHAPELIRMGARIEVHGGTATVTGVEKLRGAPVMATDLRASVSLILAGLAAEGETIVSRVYHLDRGYERVEEKLSACGAQIRRIPG</sequence>
<organism>
    <name type="scientific">Cereibacter sphaeroides (strain KD131 / KCTC 12085)</name>
    <name type="common">Rhodobacter sphaeroides</name>
    <dbReference type="NCBI Taxonomy" id="557760"/>
    <lineage>
        <taxon>Bacteria</taxon>
        <taxon>Pseudomonadati</taxon>
        <taxon>Pseudomonadota</taxon>
        <taxon>Alphaproteobacteria</taxon>
        <taxon>Rhodobacterales</taxon>
        <taxon>Paracoccaceae</taxon>
        <taxon>Cereibacter</taxon>
    </lineage>
</organism>
<evidence type="ECO:0000255" key="1">
    <source>
        <dbReference type="HAMAP-Rule" id="MF_00111"/>
    </source>
</evidence>
<protein>
    <recommendedName>
        <fullName evidence="1">UDP-N-acetylglucosamine 1-carboxyvinyltransferase</fullName>
        <ecNumber evidence="1">2.5.1.7</ecNumber>
    </recommendedName>
    <alternativeName>
        <fullName evidence="1">Enoylpyruvate transferase</fullName>
    </alternativeName>
    <alternativeName>
        <fullName evidence="1">UDP-N-acetylglucosamine enolpyruvyl transferase</fullName>
        <shortName evidence="1">EPT</shortName>
    </alternativeName>
</protein>
<reference key="1">
    <citation type="journal article" date="2009" name="J. Bacteriol.">
        <title>Complete genome sequence of Rhodobacter sphaeroides KD131.</title>
        <authorList>
            <person name="Lim S.-K."/>
            <person name="Kim S.J."/>
            <person name="Cha S.H."/>
            <person name="Oh Y.-K."/>
            <person name="Rhee H.-J."/>
            <person name="Kim M.-S."/>
            <person name="Lee J.K."/>
        </authorList>
    </citation>
    <scope>NUCLEOTIDE SEQUENCE [LARGE SCALE GENOMIC DNA]</scope>
    <source>
        <strain>KD131 / KCTC 12085</strain>
    </source>
</reference>
<proteinExistence type="inferred from homology"/>